<protein>
    <recommendedName>
        <fullName>Cellulose synthase-like protein E1</fullName>
        <shortName>AtCslE1</shortName>
        <ecNumber>2.4.1.-</ecNumber>
    </recommendedName>
</protein>
<proteinExistence type="evidence at transcript level"/>
<dbReference type="EC" id="2.4.1.-"/>
<dbReference type="EMBL" id="AC002304">
    <property type="protein sequence ID" value="AAF79313.1"/>
    <property type="status" value="ALT_SEQ"/>
    <property type="molecule type" value="Genomic_DNA"/>
</dbReference>
<dbReference type="EMBL" id="CP002684">
    <property type="protein sequence ID" value="AEE33308.1"/>
    <property type="molecule type" value="Genomic_DNA"/>
</dbReference>
<dbReference type="EMBL" id="AY064040">
    <property type="protein sequence ID" value="AAL36396.1"/>
    <property type="molecule type" value="mRNA"/>
</dbReference>
<dbReference type="EMBL" id="AK227116">
    <property type="protein sequence ID" value="BAE99166.1"/>
    <property type="molecule type" value="mRNA"/>
</dbReference>
<dbReference type="EMBL" id="AK221811">
    <property type="protein sequence ID" value="BAD93994.1"/>
    <property type="status" value="ALT_INIT"/>
    <property type="molecule type" value="mRNA"/>
</dbReference>
<dbReference type="RefSeq" id="NP_175981.2">
    <property type="nucleotide sequence ID" value="NM_104462.4"/>
</dbReference>
<dbReference type="SMR" id="Q8VZK9"/>
<dbReference type="BioGRID" id="27260">
    <property type="interactions" value="2"/>
</dbReference>
<dbReference type="FunCoup" id="Q8VZK9">
    <property type="interactions" value="13"/>
</dbReference>
<dbReference type="IntAct" id="Q8VZK9">
    <property type="interactions" value="1"/>
</dbReference>
<dbReference type="STRING" id="3702.Q8VZK9"/>
<dbReference type="CAZy" id="GT2">
    <property type="family name" value="Glycosyltransferase Family 2"/>
</dbReference>
<dbReference type="iPTMnet" id="Q8VZK9"/>
<dbReference type="SwissPalm" id="Q8VZK9"/>
<dbReference type="PaxDb" id="3702-AT1G55850.1"/>
<dbReference type="ProteomicsDB" id="222619"/>
<dbReference type="EnsemblPlants" id="AT1G55850.1">
    <property type="protein sequence ID" value="AT1G55850.1"/>
    <property type="gene ID" value="AT1G55850"/>
</dbReference>
<dbReference type="GeneID" id="842035"/>
<dbReference type="Gramene" id="AT1G55850.1">
    <property type="protein sequence ID" value="AT1G55850.1"/>
    <property type="gene ID" value="AT1G55850"/>
</dbReference>
<dbReference type="KEGG" id="ath:AT1G55850"/>
<dbReference type="Araport" id="AT1G55850"/>
<dbReference type="TAIR" id="AT1G55850">
    <property type="gene designation" value="CSLE1"/>
</dbReference>
<dbReference type="eggNOG" id="ENOG502QS7H">
    <property type="taxonomic scope" value="Eukaryota"/>
</dbReference>
<dbReference type="HOGENOM" id="CLU_001418_3_3_1"/>
<dbReference type="InParanoid" id="Q8VZK9"/>
<dbReference type="OMA" id="TFLGWWN"/>
<dbReference type="PhylomeDB" id="Q8VZK9"/>
<dbReference type="BioCyc" id="ARA:AT1G55850-MONOMER"/>
<dbReference type="PRO" id="PR:Q8VZK9"/>
<dbReference type="Proteomes" id="UP000006548">
    <property type="component" value="Chromosome 1"/>
</dbReference>
<dbReference type="ExpressionAtlas" id="Q8VZK9">
    <property type="expression patterns" value="baseline and differential"/>
</dbReference>
<dbReference type="GO" id="GO:0005783">
    <property type="term" value="C:endoplasmic reticulum"/>
    <property type="evidence" value="ECO:0007005"/>
    <property type="project" value="TAIR"/>
</dbReference>
<dbReference type="GO" id="GO:0000139">
    <property type="term" value="C:Golgi membrane"/>
    <property type="evidence" value="ECO:0007669"/>
    <property type="project" value="UniProtKB-SubCell"/>
</dbReference>
<dbReference type="GO" id="GO:0005634">
    <property type="term" value="C:nucleus"/>
    <property type="evidence" value="ECO:0007005"/>
    <property type="project" value="TAIR"/>
</dbReference>
<dbReference type="GO" id="GO:0016760">
    <property type="term" value="F:cellulose synthase (UDP-forming) activity"/>
    <property type="evidence" value="ECO:0007669"/>
    <property type="project" value="InterPro"/>
</dbReference>
<dbReference type="GO" id="GO:0071555">
    <property type="term" value="P:cell wall organization"/>
    <property type="evidence" value="ECO:0007669"/>
    <property type="project" value="UniProtKB-KW"/>
</dbReference>
<dbReference type="GO" id="GO:0030244">
    <property type="term" value="P:cellulose biosynthetic process"/>
    <property type="evidence" value="ECO:0007669"/>
    <property type="project" value="InterPro"/>
</dbReference>
<dbReference type="FunFam" id="3.90.550.10:FF:000138">
    <property type="entry name" value="Cellulose synthase isolog"/>
    <property type="match status" value="1"/>
</dbReference>
<dbReference type="Gene3D" id="3.90.550.10">
    <property type="entry name" value="Spore Coat Polysaccharide Biosynthesis Protein SpsA, Chain A"/>
    <property type="match status" value="2"/>
</dbReference>
<dbReference type="InterPro" id="IPR005150">
    <property type="entry name" value="Cellulose_synth"/>
</dbReference>
<dbReference type="InterPro" id="IPR029044">
    <property type="entry name" value="Nucleotide-diphossugar_trans"/>
</dbReference>
<dbReference type="PANTHER" id="PTHR13301">
    <property type="entry name" value="X-BOX TRANSCRIPTION FACTOR-RELATED"/>
    <property type="match status" value="1"/>
</dbReference>
<dbReference type="Pfam" id="PF03552">
    <property type="entry name" value="Cellulose_synt"/>
    <property type="match status" value="2"/>
</dbReference>
<dbReference type="SUPFAM" id="SSF53448">
    <property type="entry name" value="Nucleotide-diphospho-sugar transferases"/>
    <property type="match status" value="1"/>
</dbReference>
<sequence>MVNKDDRIRPVHEADGEPLFETRRRTGRVIAYRFFSASVFVCICLIWFYRIGEIGDNRTVLDRLIWFVMFIVEIWFGLYWVVTQSSRWNPVWRFPFSDRLSRRYGSDLPRLDVFVCTADPVIEPPLLVVNTVLSVTALDYPPEKLAVYLSDDGGSELTFYALTEAAEFAKTWVPFCKKFNVEPTSPAAYLSSKANCLDSAAEEVAKLYREMAARIETAARLGRIPEEARVKYGDGFSQWDADATRRNHGTILQVLVDGREGNTIAIPTLVYLSREKRPQHHHNFKAGAMNALLRVSSKITCGKIILNLDCDMYANNSKSTRDALCILLDEKEGKEIAFVQFPQCFDNVTRNDLYGSMMRVGIDVEFLGLDGNGGPLYIGTGCFHRRDVICGRKYGEEEEEEESERIHENLEPEMIKALASCTYEENTQWGKEMGVKYGCPVEDVITGLTIQCRGWKSAYLNPEKQAFLGVAPTNLHQMLVQQRRWSEGDFQIMLSKYSPVWYGKGKISLGLILGYCCYCLWAPSSLPVLIYSVLTSLCLFKGIPLFPKVSSSWFIPFGYVTVAATAYSLAEFLWCGGTFRGWWNEQRMWLYRRTSSFLFGFMDTIKKLLGVSESAFVITAKVAEEEAAERYKEEVMEFGVESPMFLVLGTLGMLNLFCFAAAVARLVSGDGGDLKTMGMQFVITGVLVVINWPLYKGMLLRQDKGKMPMSVTVKSVVLALSACTCLAFL</sequence>
<accession>Q8VZK9</accession>
<accession>Q56X66</accession>
<accession>Q9LG28</accession>
<keyword id="KW-0961">Cell wall biogenesis/degradation</keyword>
<keyword id="KW-0328">Glycosyltransferase</keyword>
<keyword id="KW-0333">Golgi apparatus</keyword>
<keyword id="KW-0472">Membrane</keyword>
<keyword id="KW-1185">Reference proteome</keyword>
<keyword id="KW-0808">Transferase</keyword>
<keyword id="KW-0812">Transmembrane</keyword>
<keyword id="KW-1133">Transmembrane helix</keyword>
<gene>
    <name type="primary">CSLE1</name>
    <name type="ordered locus">At1g55850</name>
    <name type="ORF">F14J16.9</name>
</gene>
<reference key="1">
    <citation type="journal article" date="2000" name="Nature">
        <title>Sequence and analysis of chromosome 1 of the plant Arabidopsis thaliana.</title>
        <authorList>
            <person name="Theologis A."/>
            <person name="Ecker J.R."/>
            <person name="Palm C.J."/>
            <person name="Federspiel N.A."/>
            <person name="Kaul S."/>
            <person name="White O."/>
            <person name="Alonso J."/>
            <person name="Altafi H."/>
            <person name="Araujo R."/>
            <person name="Bowman C.L."/>
            <person name="Brooks S.Y."/>
            <person name="Buehler E."/>
            <person name="Chan A."/>
            <person name="Chao Q."/>
            <person name="Chen H."/>
            <person name="Cheuk R.F."/>
            <person name="Chin C.W."/>
            <person name="Chung M.K."/>
            <person name="Conn L."/>
            <person name="Conway A.B."/>
            <person name="Conway A.R."/>
            <person name="Creasy T.H."/>
            <person name="Dewar K."/>
            <person name="Dunn P."/>
            <person name="Etgu P."/>
            <person name="Feldblyum T.V."/>
            <person name="Feng J.-D."/>
            <person name="Fong B."/>
            <person name="Fujii C.Y."/>
            <person name="Gill J.E."/>
            <person name="Goldsmith A.D."/>
            <person name="Haas B."/>
            <person name="Hansen N.F."/>
            <person name="Hughes B."/>
            <person name="Huizar L."/>
            <person name="Hunter J.L."/>
            <person name="Jenkins J."/>
            <person name="Johnson-Hopson C."/>
            <person name="Khan S."/>
            <person name="Khaykin E."/>
            <person name="Kim C.J."/>
            <person name="Koo H.L."/>
            <person name="Kremenetskaia I."/>
            <person name="Kurtz D.B."/>
            <person name="Kwan A."/>
            <person name="Lam B."/>
            <person name="Langin-Hooper S."/>
            <person name="Lee A."/>
            <person name="Lee J.M."/>
            <person name="Lenz C.A."/>
            <person name="Li J.H."/>
            <person name="Li Y.-P."/>
            <person name="Lin X."/>
            <person name="Liu S.X."/>
            <person name="Liu Z.A."/>
            <person name="Luros J.S."/>
            <person name="Maiti R."/>
            <person name="Marziali A."/>
            <person name="Militscher J."/>
            <person name="Miranda M."/>
            <person name="Nguyen M."/>
            <person name="Nierman W.C."/>
            <person name="Osborne B.I."/>
            <person name="Pai G."/>
            <person name="Peterson J."/>
            <person name="Pham P.K."/>
            <person name="Rizzo M."/>
            <person name="Rooney T."/>
            <person name="Rowley D."/>
            <person name="Sakano H."/>
            <person name="Salzberg S.L."/>
            <person name="Schwartz J.R."/>
            <person name="Shinn P."/>
            <person name="Southwick A.M."/>
            <person name="Sun H."/>
            <person name="Tallon L.J."/>
            <person name="Tambunga G."/>
            <person name="Toriumi M.J."/>
            <person name="Town C.D."/>
            <person name="Utterback T."/>
            <person name="Van Aken S."/>
            <person name="Vaysberg M."/>
            <person name="Vysotskaia V.S."/>
            <person name="Walker M."/>
            <person name="Wu D."/>
            <person name="Yu G."/>
            <person name="Fraser C.M."/>
            <person name="Venter J.C."/>
            <person name="Davis R.W."/>
        </authorList>
    </citation>
    <scope>NUCLEOTIDE SEQUENCE [LARGE SCALE GENOMIC DNA]</scope>
    <source>
        <strain>cv. Columbia</strain>
    </source>
</reference>
<reference key="2">
    <citation type="journal article" date="2017" name="Plant J.">
        <title>Araport11: a complete reannotation of the Arabidopsis thaliana reference genome.</title>
        <authorList>
            <person name="Cheng C.Y."/>
            <person name="Krishnakumar V."/>
            <person name="Chan A.P."/>
            <person name="Thibaud-Nissen F."/>
            <person name="Schobel S."/>
            <person name="Town C.D."/>
        </authorList>
    </citation>
    <scope>GENOME REANNOTATION</scope>
    <source>
        <strain>cv. Columbia</strain>
    </source>
</reference>
<reference key="3">
    <citation type="journal article" date="2003" name="Science">
        <title>Empirical analysis of transcriptional activity in the Arabidopsis genome.</title>
        <authorList>
            <person name="Yamada K."/>
            <person name="Lim J."/>
            <person name="Dale J.M."/>
            <person name="Chen H."/>
            <person name="Shinn P."/>
            <person name="Palm C.J."/>
            <person name="Southwick A.M."/>
            <person name="Wu H.C."/>
            <person name="Kim C.J."/>
            <person name="Nguyen M."/>
            <person name="Pham P.K."/>
            <person name="Cheuk R.F."/>
            <person name="Karlin-Newmann G."/>
            <person name="Liu S.X."/>
            <person name="Lam B."/>
            <person name="Sakano H."/>
            <person name="Wu T."/>
            <person name="Yu G."/>
            <person name="Miranda M."/>
            <person name="Quach H.L."/>
            <person name="Tripp M."/>
            <person name="Chang C.H."/>
            <person name="Lee J.M."/>
            <person name="Toriumi M.J."/>
            <person name="Chan M.M."/>
            <person name="Tang C.C."/>
            <person name="Onodera C.S."/>
            <person name="Deng J.M."/>
            <person name="Akiyama K."/>
            <person name="Ansari Y."/>
            <person name="Arakawa T."/>
            <person name="Banh J."/>
            <person name="Banno F."/>
            <person name="Bowser L."/>
            <person name="Brooks S.Y."/>
            <person name="Carninci P."/>
            <person name="Chao Q."/>
            <person name="Choy N."/>
            <person name="Enju A."/>
            <person name="Goldsmith A.D."/>
            <person name="Gurjal M."/>
            <person name="Hansen N.F."/>
            <person name="Hayashizaki Y."/>
            <person name="Johnson-Hopson C."/>
            <person name="Hsuan V.W."/>
            <person name="Iida K."/>
            <person name="Karnes M."/>
            <person name="Khan S."/>
            <person name="Koesema E."/>
            <person name="Ishida J."/>
            <person name="Jiang P.X."/>
            <person name="Jones T."/>
            <person name="Kawai J."/>
            <person name="Kamiya A."/>
            <person name="Meyers C."/>
            <person name="Nakajima M."/>
            <person name="Narusaka M."/>
            <person name="Seki M."/>
            <person name="Sakurai T."/>
            <person name="Satou M."/>
            <person name="Tamse R."/>
            <person name="Vaysberg M."/>
            <person name="Wallender E.K."/>
            <person name="Wong C."/>
            <person name="Yamamura Y."/>
            <person name="Yuan S."/>
            <person name="Shinozaki K."/>
            <person name="Davis R.W."/>
            <person name="Theologis A."/>
            <person name="Ecker J.R."/>
        </authorList>
    </citation>
    <scope>NUCLEOTIDE SEQUENCE [LARGE SCALE MRNA]</scope>
    <source>
        <strain>cv. Columbia</strain>
    </source>
</reference>
<reference key="4">
    <citation type="submission" date="2006-07" db="EMBL/GenBank/DDBJ databases">
        <title>Large-scale analysis of RIKEN Arabidopsis full-length (RAFL) cDNAs.</title>
        <authorList>
            <person name="Totoki Y."/>
            <person name="Seki M."/>
            <person name="Ishida J."/>
            <person name="Nakajima M."/>
            <person name="Enju A."/>
            <person name="Kamiya A."/>
            <person name="Narusaka M."/>
            <person name="Shin-i T."/>
            <person name="Nakagawa M."/>
            <person name="Sakamoto N."/>
            <person name="Oishi K."/>
            <person name="Kohara Y."/>
            <person name="Kobayashi M."/>
            <person name="Toyoda A."/>
            <person name="Sakaki Y."/>
            <person name="Sakurai T."/>
            <person name="Iida K."/>
            <person name="Akiyama K."/>
            <person name="Satou M."/>
            <person name="Toyoda T."/>
            <person name="Konagaya A."/>
            <person name="Carninci P."/>
            <person name="Kawai J."/>
            <person name="Hayashizaki Y."/>
            <person name="Shinozaki K."/>
        </authorList>
    </citation>
    <scope>NUCLEOTIDE SEQUENCE [LARGE SCALE MRNA]</scope>
    <source>
        <strain>cv. Columbia</strain>
    </source>
</reference>
<reference key="5">
    <citation type="journal article" date="2000" name="Plant Physiol.">
        <title>The cellulose synthase superfamily.</title>
        <authorList>
            <person name="Richmond T.A."/>
            <person name="Somerville C.R."/>
        </authorList>
    </citation>
    <scope>GENE FAMILY</scope>
    <scope>NOMENCLATURE</scope>
</reference>
<name>CSLE1_ARATH</name>
<comment type="function">
    <text>Thought to be a Golgi-localized beta-glycan synthase that polymerize the backbones of noncellulosic polysaccharides (hemicelluloses) of plant cell wall.</text>
</comment>
<comment type="subcellular location">
    <subcellularLocation>
        <location evidence="2">Golgi apparatus membrane</location>
        <topology evidence="2">Multi-pass membrane protein</topology>
    </subcellularLocation>
</comment>
<comment type="similarity">
    <text evidence="2">Belongs to the glycosyltransferase 2 family. Plant cellulose synthase-like E subfamily.</text>
</comment>
<comment type="sequence caution" evidence="2">
    <conflict type="erroneous gene model prediction">
        <sequence resource="EMBL-CDS" id="AAF79313"/>
    </conflict>
</comment>
<comment type="sequence caution" evidence="2">
    <conflict type="erroneous initiation">
        <sequence resource="EMBL-CDS" id="BAD93994"/>
    </conflict>
</comment>
<evidence type="ECO:0000255" key="1"/>
<evidence type="ECO:0000305" key="2"/>
<feature type="chain" id="PRO_0000319352" description="Cellulose synthase-like protein E1">
    <location>
        <begin position="1"/>
        <end position="729"/>
    </location>
</feature>
<feature type="transmembrane region" description="Helical" evidence="1">
    <location>
        <begin position="29"/>
        <end position="49"/>
    </location>
</feature>
<feature type="transmembrane region" description="Helical" evidence="1">
    <location>
        <begin position="64"/>
        <end position="84"/>
    </location>
</feature>
<feature type="transmembrane region" description="Helical" evidence="1">
    <location>
        <begin position="526"/>
        <end position="546"/>
    </location>
</feature>
<feature type="transmembrane region" description="Helical" evidence="1">
    <location>
        <begin position="553"/>
        <end position="573"/>
    </location>
</feature>
<feature type="transmembrane region" description="Helical" evidence="1">
    <location>
        <begin position="644"/>
        <end position="664"/>
    </location>
</feature>
<feature type="transmembrane region" description="Helical" evidence="1">
    <location>
        <begin position="680"/>
        <end position="700"/>
    </location>
</feature>
<feature type="transmembrane region" description="Helical" evidence="1">
    <location>
        <begin position="709"/>
        <end position="729"/>
    </location>
</feature>
<feature type="active site" evidence="1">
    <location>
        <position position="152"/>
    </location>
</feature>
<feature type="active site" evidence="1">
    <location>
        <position position="443"/>
    </location>
</feature>
<organism>
    <name type="scientific">Arabidopsis thaliana</name>
    <name type="common">Mouse-ear cress</name>
    <dbReference type="NCBI Taxonomy" id="3702"/>
    <lineage>
        <taxon>Eukaryota</taxon>
        <taxon>Viridiplantae</taxon>
        <taxon>Streptophyta</taxon>
        <taxon>Embryophyta</taxon>
        <taxon>Tracheophyta</taxon>
        <taxon>Spermatophyta</taxon>
        <taxon>Magnoliopsida</taxon>
        <taxon>eudicotyledons</taxon>
        <taxon>Gunneridae</taxon>
        <taxon>Pentapetalae</taxon>
        <taxon>rosids</taxon>
        <taxon>malvids</taxon>
        <taxon>Brassicales</taxon>
        <taxon>Brassicaceae</taxon>
        <taxon>Camelineae</taxon>
        <taxon>Arabidopsis</taxon>
    </lineage>
</organism>